<reference key="1">
    <citation type="journal article" date="2010" name="Appl. Environ. Microbiol.">
        <title>The genome sequence of Psychrobacter arcticus 273-4, a psychroactive Siberian permafrost bacterium, reveals mechanisms for adaptation to low-temperature growth.</title>
        <authorList>
            <person name="Ayala-del-Rio H.L."/>
            <person name="Chain P.S."/>
            <person name="Grzymski J.J."/>
            <person name="Ponder M.A."/>
            <person name="Ivanova N."/>
            <person name="Bergholz P.W."/>
            <person name="Di Bartolo G."/>
            <person name="Hauser L."/>
            <person name="Land M."/>
            <person name="Bakermans C."/>
            <person name="Rodrigues D."/>
            <person name="Klappenbach J."/>
            <person name="Zarka D."/>
            <person name="Larimer F."/>
            <person name="Richardson P."/>
            <person name="Murray A."/>
            <person name="Thomashow M."/>
            <person name="Tiedje J.M."/>
        </authorList>
    </citation>
    <scope>NUCLEOTIDE SEQUENCE [LARGE SCALE GENOMIC DNA]</scope>
    <source>
        <strain>DSM 17307 / VKM B-2377 / 273-4</strain>
    </source>
</reference>
<organism>
    <name type="scientific">Psychrobacter arcticus (strain DSM 17307 / VKM B-2377 / 273-4)</name>
    <dbReference type="NCBI Taxonomy" id="259536"/>
    <lineage>
        <taxon>Bacteria</taxon>
        <taxon>Pseudomonadati</taxon>
        <taxon>Pseudomonadota</taxon>
        <taxon>Gammaproteobacteria</taxon>
        <taxon>Moraxellales</taxon>
        <taxon>Moraxellaceae</taxon>
        <taxon>Psychrobacter</taxon>
    </lineage>
</organism>
<name>GUAA_PSYA2</name>
<accession>Q4FVS5</accession>
<keyword id="KW-0067">ATP-binding</keyword>
<keyword id="KW-0315">Glutamine amidotransferase</keyword>
<keyword id="KW-0332">GMP biosynthesis</keyword>
<keyword id="KW-0436">Ligase</keyword>
<keyword id="KW-0547">Nucleotide-binding</keyword>
<keyword id="KW-0658">Purine biosynthesis</keyword>
<keyword id="KW-1185">Reference proteome</keyword>
<feature type="chain" id="PRO_0000229461" description="GMP synthase [glutamine-hydrolyzing]">
    <location>
        <begin position="1"/>
        <end position="536"/>
    </location>
</feature>
<feature type="domain" description="Glutamine amidotransferase type-1" evidence="1">
    <location>
        <begin position="19"/>
        <end position="212"/>
    </location>
</feature>
<feature type="domain" description="GMPS ATP-PPase" evidence="1">
    <location>
        <begin position="213"/>
        <end position="411"/>
    </location>
</feature>
<feature type="active site" description="Nucleophile" evidence="1">
    <location>
        <position position="96"/>
    </location>
</feature>
<feature type="active site" evidence="1">
    <location>
        <position position="186"/>
    </location>
</feature>
<feature type="active site" evidence="1">
    <location>
        <position position="188"/>
    </location>
</feature>
<feature type="binding site" evidence="1">
    <location>
        <begin position="240"/>
        <end position="246"/>
    </location>
    <ligand>
        <name>ATP</name>
        <dbReference type="ChEBI" id="CHEBI:30616"/>
    </ligand>
</feature>
<dbReference type="EC" id="6.3.5.2" evidence="1"/>
<dbReference type="EMBL" id="CP000082">
    <property type="protein sequence ID" value="AAZ17883.1"/>
    <property type="molecule type" value="Genomic_DNA"/>
</dbReference>
<dbReference type="SMR" id="Q4FVS5"/>
<dbReference type="STRING" id="259536.Psyc_0009"/>
<dbReference type="MEROPS" id="C26.957"/>
<dbReference type="KEGG" id="par:Psyc_0009"/>
<dbReference type="eggNOG" id="COG0518">
    <property type="taxonomic scope" value="Bacteria"/>
</dbReference>
<dbReference type="eggNOG" id="COG0519">
    <property type="taxonomic scope" value="Bacteria"/>
</dbReference>
<dbReference type="HOGENOM" id="CLU_014340_0_5_6"/>
<dbReference type="UniPathway" id="UPA00189">
    <property type="reaction ID" value="UER00296"/>
</dbReference>
<dbReference type="Proteomes" id="UP000000546">
    <property type="component" value="Chromosome"/>
</dbReference>
<dbReference type="GO" id="GO:0005829">
    <property type="term" value="C:cytosol"/>
    <property type="evidence" value="ECO:0007669"/>
    <property type="project" value="TreeGrafter"/>
</dbReference>
<dbReference type="GO" id="GO:0005524">
    <property type="term" value="F:ATP binding"/>
    <property type="evidence" value="ECO:0007669"/>
    <property type="project" value="UniProtKB-UniRule"/>
</dbReference>
<dbReference type="GO" id="GO:0003921">
    <property type="term" value="F:GMP synthase activity"/>
    <property type="evidence" value="ECO:0007669"/>
    <property type="project" value="InterPro"/>
</dbReference>
<dbReference type="CDD" id="cd01742">
    <property type="entry name" value="GATase1_GMP_Synthase"/>
    <property type="match status" value="1"/>
</dbReference>
<dbReference type="CDD" id="cd01997">
    <property type="entry name" value="GMP_synthase_C"/>
    <property type="match status" value="1"/>
</dbReference>
<dbReference type="FunFam" id="3.30.300.10:FF:000002">
    <property type="entry name" value="GMP synthase [glutamine-hydrolyzing]"/>
    <property type="match status" value="1"/>
</dbReference>
<dbReference type="FunFam" id="3.40.50.620:FF:000001">
    <property type="entry name" value="GMP synthase [glutamine-hydrolyzing]"/>
    <property type="match status" value="1"/>
</dbReference>
<dbReference type="FunFam" id="3.40.50.880:FF:000001">
    <property type="entry name" value="GMP synthase [glutamine-hydrolyzing]"/>
    <property type="match status" value="1"/>
</dbReference>
<dbReference type="Gene3D" id="3.30.300.10">
    <property type="match status" value="1"/>
</dbReference>
<dbReference type="Gene3D" id="3.40.50.880">
    <property type="match status" value="1"/>
</dbReference>
<dbReference type="Gene3D" id="3.40.50.620">
    <property type="entry name" value="HUPs"/>
    <property type="match status" value="1"/>
</dbReference>
<dbReference type="HAMAP" id="MF_00344">
    <property type="entry name" value="GMP_synthase"/>
    <property type="match status" value="1"/>
</dbReference>
<dbReference type="InterPro" id="IPR029062">
    <property type="entry name" value="Class_I_gatase-like"/>
</dbReference>
<dbReference type="InterPro" id="IPR017926">
    <property type="entry name" value="GATASE"/>
</dbReference>
<dbReference type="InterPro" id="IPR001674">
    <property type="entry name" value="GMP_synth_C"/>
</dbReference>
<dbReference type="InterPro" id="IPR004739">
    <property type="entry name" value="GMP_synth_GATase"/>
</dbReference>
<dbReference type="InterPro" id="IPR022955">
    <property type="entry name" value="GMP_synthase"/>
</dbReference>
<dbReference type="InterPro" id="IPR025777">
    <property type="entry name" value="GMPS_ATP_PPase_dom"/>
</dbReference>
<dbReference type="InterPro" id="IPR022310">
    <property type="entry name" value="NAD/GMP_synthase"/>
</dbReference>
<dbReference type="InterPro" id="IPR014729">
    <property type="entry name" value="Rossmann-like_a/b/a_fold"/>
</dbReference>
<dbReference type="NCBIfam" id="TIGR00884">
    <property type="entry name" value="guaA_Cterm"/>
    <property type="match status" value="1"/>
</dbReference>
<dbReference type="NCBIfam" id="TIGR00888">
    <property type="entry name" value="guaA_Nterm"/>
    <property type="match status" value="1"/>
</dbReference>
<dbReference type="NCBIfam" id="NF000848">
    <property type="entry name" value="PRK00074.1"/>
    <property type="match status" value="1"/>
</dbReference>
<dbReference type="PANTHER" id="PTHR11922:SF2">
    <property type="entry name" value="GMP SYNTHASE [GLUTAMINE-HYDROLYZING]"/>
    <property type="match status" value="1"/>
</dbReference>
<dbReference type="PANTHER" id="PTHR11922">
    <property type="entry name" value="GMP SYNTHASE-RELATED"/>
    <property type="match status" value="1"/>
</dbReference>
<dbReference type="Pfam" id="PF00117">
    <property type="entry name" value="GATase"/>
    <property type="match status" value="1"/>
</dbReference>
<dbReference type="Pfam" id="PF00958">
    <property type="entry name" value="GMP_synt_C"/>
    <property type="match status" value="1"/>
</dbReference>
<dbReference type="Pfam" id="PF02540">
    <property type="entry name" value="NAD_synthase"/>
    <property type="match status" value="1"/>
</dbReference>
<dbReference type="PRINTS" id="PR00097">
    <property type="entry name" value="ANTSNTHASEII"/>
</dbReference>
<dbReference type="PRINTS" id="PR00096">
    <property type="entry name" value="GATASE"/>
</dbReference>
<dbReference type="SUPFAM" id="SSF52402">
    <property type="entry name" value="Adenine nucleotide alpha hydrolases-like"/>
    <property type="match status" value="1"/>
</dbReference>
<dbReference type="SUPFAM" id="SSF52317">
    <property type="entry name" value="Class I glutamine amidotransferase-like"/>
    <property type="match status" value="1"/>
</dbReference>
<dbReference type="SUPFAM" id="SSF54810">
    <property type="entry name" value="GMP synthetase C-terminal dimerisation domain"/>
    <property type="match status" value="1"/>
</dbReference>
<dbReference type="PROSITE" id="PS51273">
    <property type="entry name" value="GATASE_TYPE_1"/>
    <property type="match status" value="1"/>
</dbReference>
<dbReference type="PROSITE" id="PS51553">
    <property type="entry name" value="GMPS_ATP_PPASE"/>
    <property type="match status" value="1"/>
</dbReference>
<evidence type="ECO:0000255" key="1">
    <source>
        <dbReference type="HAMAP-Rule" id="MF_00344"/>
    </source>
</evidence>
<protein>
    <recommendedName>
        <fullName evidence="1">GMP synthase [glutamine-hydrolyzing]</fullName>
        <ecNumber evidence="1">6.3.5.2</ecNumber>
    </recommendedName>
    <alternativeName>
        <fullName evidence="1">GMP synthetase</fullName>
    </alternativeName>
    <alternativeName>
        <fullName evidence="1">Glutamine amidotransferase</fullName>
    </alternativeName>
</protein>
<proteinExistence type="inferred from homology"/>
<sequence length="536" mass="58744">MDTLFMTTVTATPAIKEDRILILDFGSQYSQLIARRVRDSGVFCEMFPYDIDTQRITDFGAKGIILSGGPESVHAENSPRINDAVFELGVPVLGICYGMQAMAERFGGKVHASDIHEFGAATINIDGKSTLTNGIEDAAAKLNVWMSHGDKVVDAPQGFDIVASTPSCPIAIMADDSRHYYGLQFHPEVTHTAQGQALLGRFVHEICDCAGSWTPDNIIDMRIEQLKKQIGDKQVLLGLSGGVDSSVVAALLHKAIGDQLTCVFVDTGLLRLHEGDQVMQIFAENMGVKVIRVDAEELFLTALAGESDPEAKRKIIGKTFIDVFANSAREISEQSDGKVIEFLAQGTIYPDVIESAKSHQGKAHVIKSHHNVGGLPDDLAFELVEPLRDLFKDEVRKLGITLGLPAKMINRHPFPGPGLGVRILGEVTKEFADILRSADAIFMEELEKSGWYEKTAQAFAVFQPIKSVGVVGDGRRYAWVIALRAVETVDFMTARFAHLPYDLIETVSNRIMNEIAEVSRVTYDVSSKPPATIEWE</sequence>
<gene>
    <name evidence="1" type="primary">guaA</name>
    <name type="ordered locus">Psyc_0009</name>
</gene>
<comment type="function">
    <text evidence="1">Catalyzes the synthesis of GMP from XMP.</text>
</comment>
<comment type="catalytic activity">
    <reaction evidence="1">
        <text>XMP + L-glutamine + ATP + H2O = GMP + L-glutamate + AMP + diphosphate + 2 H(+)</text>
        <dbReference type="Rhea" id="RHEA:11680"/>
        <dbReference type="ChEBI" id="CHEBI:15377"/>
        <dbReference type="ChEBI" id="CHEBI:15378"/>
        <dbReference type="ChEBI" id="CHEBI:29985"/>
        <dbReference type="ChEBI" id="CHEBI:30616"/>
        <dbReference type="ChEBI" id="CHEBI:33019"/>
        <dbReference type="ChEBI" id="CHEBI:57464"/>
        <dbReference type="ChEBI" id="CHEBI:58115"/>
        <dbReference type="ChEBI" id="CHEBI:58359"/>
        <dbReference type="ChEBI" id="CHEBI:456215"/>
        <dbReference type="EC" id="6.3.5.2"/>
    </reaction>
</comment>
<comment type="pathway">
    <text evidence="1">Purine metabolism; GMP biosynthesis; GMP from XMP (L-Gln route): step 1/1.</text>
</comment>
<comment type="subunit">
    <text evidence="1">Homodimer.</text>
</comment>